<accession>Q7MH42</accession>
<evidence type="ECO:0000255" key="1">
    <source>
        <dbReference type="HAMAP-Rule" id="MF_00054"/>
    </source>
</evidence>
<feature type="chain" id="PRO_0000091264" description="Elongation factor G 1">
    <location>
        <begin position="1"/>
        <end position="699"/>
    </location>
</feature>
<feature type="domain" description="tr-type G">
    <location>
        <begin position="8"/>
        <end position="290"/>
    </location>
</feature>
<feature type="binding site" evidence="1">
    <location>
        <begin position="17"/>
        <end position="24"/>
    </location>
    <ligand>
        <name>GTP</name>
        <dbReference type="ChEBI" id="CHEBI:37565"/>
    </ligand>
</feature>
<feature type="binding site" evidence="1">
    <location>
        <begin position="88"/>
        <end position="92"/>
    </location>
    <ligand>
        <name>GTP</name>
        <dbReference type="ChEBI" id="CHEBI:37565"/>
    </ligand>
</feature>
<feature type="binding site" evidence="1">
    <location>
        <begin position="142"/>
        <end position="145"/>
    </location>
    <ligand>
        <name>GTP</name>
        <dbReference type="ChEBI" id="CHEBI:37565"/>
    </ligand>
</feature>
<organism>
    <name type="scientific">Vibrio vulnificus (strain YJ016)</name>
    <dbReference type="NCBI Taxonomy" id="196600"/>
    <lineage>
        <taxon>Bacteria</taxon>
        <taxon>Pseudomonadati</taxon>
        <taxon>Pseudomonadota</taxon>
        <taxon>Gammaproteobacteria</taxon>
        <taxon>Vibrionales</taxon>
        <taxon>Vibrionaceae</taxon>
        <taxon>Vibrio</taxon>
    </lineage>
</organism>
<dbReference type="EMBL" id="BA000037">
    <property type="protein sequence ID" value="BAC95794.1"/>
    <property type="molecule type" value="Genomic_DNA"/>
</dbReference>
<dbReference type="SMR" id="Q7MH42"/>
<dbReference type="STRING" id="672.VV93_v1c27580"/>
<dbReference type="KEGG" id="vvy:VV3030"/>
<dbReference type="eggNOG" id="COG0480">
    <property type="taxonomic scope" value="Bacteria"/>
</dbReference>
<dbReference type="HOGENOM" id="CLU_002794_4_1_6"/>
<dbReference type="Proteomes" id="UP000002675">
    <property type="component" value="Chromosome I"/>
</dbReference>
<dbReference type="GO" id="GO:0005737">
    <property type="term" value="C:cytoplasm"/>
    <property type="evidence" value="ECO:0007669"/>
    <property type="project" value="UniProtKB-SubCell"/>
</dbReference>
<dbReference type="GO" id="GO:0005525">
    <property type="term" value="F:GTP binding"/>
    <property type="evidence" value="ECO:0007669"/>
    <property type="project" value="UniProtKB-UniRule"/>
</dbReference>
<dbReference type="GO" id="GO:0003924">
    <property type="term" value="F:GTPase activity"/>
    <property type="evidence" value="ECO:0007669"/>
    <property type="project" value="InterPro"/>
</dbReference>
<dbReference type="GO" id="GO:0097216">
    <property type="term" value="F:guanosine tetraphosphate binding"/>
    <property type="evidence" value="ECO:0007669"/>
    <property type="project" value="UniProtKB-ARBA"/>
</dbReference>
<dbReference type="GO" id="GO:0003746">
    <property type="term" value="F:translation elongation factor activity"/>
    <property type="evidence" value="ECO:0007669"/>
    <property type="project" value="UniProtKB-UniRule"/>
</dbReference>
<dbReference type="GO" id="GO:0032790">
    <property type="term" value="P:ribosome disassembly"/>
    <property type="evidence" value="ECO:0007669"/>
    <property type="project" value="TreeGrafter"/>
</dbReference>
<dbReference type="CDD" id="cd01886">
    <property type="entry name" value="EF-G"/>
    <property type="match status" value="1"/>
</dbReference>
<dbReference type="CDD" id="cd16262">
    <property type="entry name" value="EFG_III"/>
    <property type="match status" value="1"/>
</dbReference>
<dbReference type="CDD" id="cd01434">
    <property type="entry name" value="EFG_mtEFG1_IV"/>
    <property type="match status" value="1"/>
</dbReference>
<dbReference type="CDD" id="cd03713">
    <property type="entry name" value="EFG_mtEFG_C"/>
    <property type="match status" value="1"/>
</dbReference>
<dbReference type="CDD" id="cd04088">
    <property type="entry name" value="EFG_mtEFG_II"/>
    <property type="match status" value="1"/>
</dbReference>
<dbReference type="FunFam" id="2.40.30.10:FF:000006">
    <property type="entry name" value="Elongation factor G"/>
    <property type="match status" value="1"/>
</dbReference>
<dbReference type="FunFam" id="3.30.230.10:FF:000003">
    <property type="entry name" value="Elongation factor G"/>
    <property type="match status" value="1"/>
</dbReference>
<dbReference type="FunFam" id="3.30.70.240:FF:000001">
    <property type="entry name" value="Elongation factor G"/>
    <property type="match status" value="1"/>
</dbReference>
<dbReference type="FunFam" id="3.30.70.870:FF:000001">
    <property type="entry name" value="Elongation factor G"/>
    <property type="match status" value="1"/>
</dbReference>
<dbReference type="FunFam" id="3.40.50.300:FF:000029">
    <property type="entry name" value="Elongation factor G"/>
    <property type="match status" value="1"/>
</dbReference>
<dbReference type="Gene3D" id="3.30.230.10">
    <property type="match status" value="1"/>
</dbReference>
<dbReference type="Gene3D" id="3.30.70.240">
    <property type="match status" value="1"/>
</dbReference>
<dbReference type="Gene3D" id="3.30.70.870">
    <property type="entry name" value="Elongation Factor G (Translational Gtpase), domain 3"/>
    <property type="match status" value="1"/>
</dbReference>
<dbReference type="Gene3D" id="3.40.50.300">
    <property type="entry name" value="P-loop containing nucleotide triphosphate hydrolases"/>
    <property type="match status" value="1"/>
</dbReference>
<dbReference type="Gene3D" id="2.40.30.10">
    <property type="entry name" value="Translation factors"/>
    <property type="match status" value="1"/>
</dbReference>
<dbReference type="HAMAP" id="MF_00054_B">
    <property type="entry name" value="EF_G_EF_2_B"/>
    <property type="match status" value="1"/>
</dbReference>
<dbReference type="InterPro" id="IPR041095">
    <property type="entry name" value="EFG_II"/>
</dbReference>
<dbReference type="InterPro" id="IPR009022">
    <property type="entry name" value="EFG_III"/>
</dbReference>
<dbReference type="InterPro" id="IPR035647">
    <property type="entry name" value="EFG_III/V"/>
</dbReference>
<dbReference type="InterPro" id="IPR047872">
    <property type="entry name" value="EFG_IV"/>
</dbReference>
<dbReference type="InterPro" id="IPR035649">
    <property type="entry name" value="EFG_V"/>
</dbReference>
<dbReference type="InterPro" id="IPR000640">
    <property type="entry name" value="EFG_V-like"/>
</dbReference>
<dbReference type="InterPro" id="IPR004161">
    <property type="entry name" value="EFTu-like_2"/>
</dbReference>
<dbReference type="InterPro" id="IPR031157">
    <property type="entry name" value="G_TR_CS"/>
</dbReference>
<dbReference type="InterPro" id="IPR027417">
    <property type="entry name" value="P-loop_NTPase"/>
</dbReference>
<dbReference type="InterPro" id="IPR020568">
    <property type="entry name" value="Ribosomal_Su5_D2-typ_SF"/>
</dbReference>
<dbReference type="InterPro" id="IPR014721">
    <property type="entry name" value="Ribsml_uS5_D2-typ_fold_subgr"/>
</dbReference>
<dbReference type="InterPro" id="IPR005225">
    <property type="entry name" value="Small_GTP-bd"/>
</dbReference>
<dbReference type="InterPro" id="IPR000795">
    <property type="entry name" value="T_Tr_GTP-bd_dom"/>
</dbReference>
<dbReference type="InterPro" id="IPR009000">
    <property type="entry name" value="Transl_B-barrel_sf"/>
</dbReference>
<dbReference type="InterPro" id="IPR004540">
    <property type="entry name" value="Transl_elong_EFG/EF2"/>
</dbReference>
<dbReference type="InterPro" id="IPR005517">
    <property type="entry name" value="Transl_elong_EFG/EF2_IV"/>
</dbReference>
<dbReference type="NCBIfam" id="TIGR00484">
    <property type="entry name" value="EF-G"/>
    <property type="match status" value="1"/>
</dbReference>
<dbReference type="NCBIfam" id="NF009381">
    <property type="entry name" value="PRK12740.1-5"/>
    <property type="match status" value="1"/>
</dbReference>
<dbReference type="NCBIfam" id="TIGR00231">
    <property type="entry name" value="small_GTP"/>
    <property type="match status" value="1"/>
</dbReference>
<dbReference type="PANTHER" id="PTHR43261:SF1">
    <property type="entry name" value="RIBOSOME-RELEASING FACTOR 2, MITOCHONDRIAL"/>
    <property type="match status" value="1"/>
</dbReference>
<dbReference type="PANTHER" id="PTHR43261">
    <property type="entry name" value="TRANSLATION ELONGATION FACTOR G-RELATED"/>
    <property type="match status" value="1"/>
</dbReference>
<dbReference type="Pfam" id="PF00679">
    <property type="entry name" value="EFG_C"/>
    <property type="match status" value="1"/>
</dbReference>
<dbReference type="Pfam" id="PF14492">
    <property type="entry name" value="EFG_III"/>
    <property type="match status" value="1"/>
</dbReference>
<dbReference type="Pfam" id="PF03764">
    <property type="entry name" value="EFG_IV"/>
    <property type="match status" value="1"/>
</dbReference>
<dbReference type="Pfam" id="PF00009">
    <property type="entry name" value="GTP_EFTU"/>
    <property type="match status" value="1"/>
</dbReference>
<dbReference type="Pfam" id="PF03144">
    <property type="entry name" value="GTP_EFTU_D2"/>
    <property type="match status" value="1"/>
</dbReference>
<dbReference type="PRINTS" id="PR00315">
    <property type="entry name" value="ELONGATNFCT"/>
</dbReference>
<dbReference type="SMART" id="SM00838">
    <property type="entry name" value="EFG_C"/>
    <property type="match status" value="1"/>
</dbReference>
<dbReference type="SMART" id="SM00889">
    <property type="entry name" value="EFG_IV"/>
    <property type="match status" value="1"/>
</dbReference>
<dbReference type="SUPFAM" id="SSF54980">
    <property type="entry name" value="EF-G C-terminal domain-like"/>
    <property type="match status" value="2"/>
</dbReference>
<dbReference type="SUPFAM" id="SSF52540">
    <property type="entry name" value="P-loop containing nucleoside triphosphate hydrolases"/>
    <property type="match status" value="1"/>
</dbReference>
<dbReference type="SUPFAM" id="SSF54211">
    <property type="entry name" value="Ribosomal protein S5 domain 2-like"/>
    <property type="match status" value="1"/>
</dbReference>
<dbReference type="SUPFAM" id="SSF50447">
    <property type="entry name" value="Translation proteins"/>
    <property type="match status" value="1"/>
</dbReference>
<dbReference type="PROSITE" id="PS00301">
    <property type="entry name" value="G_TR_1"/>
    <property type="match status" value="1"/>
</dbReference>
<dbReference type="PROSITE" id="PS51722">
    <property type="entry name" value="G_TR_2"/>
    <property type="match status" value="1"/>
</dbReference>
<proteinExistence type="inferred from homology"/>
<gene>
    <name evidence="1" type="primary">fusA1</name>
    <name type="ordered locus">VV3030</name>
</gene>
<keyword id="KW-0963">Cytoplasm</keyword>
<keyword id="KW-0251">Elongation factor</keyword>
<keyword id="KW-0342">GTP-binding</keyword>
<keyword id="KW-0547">Nucleotide-binding</keyword>
<keyword id="KW-0648">Protein biosynthesis</keyword>
<reference key="1">
    <citation type="journal article" date="2003" name="Genome Res.">
        <title>Comparative genome analysis of Vibrio vulnificus, a marine pathogen.</title>
        <authorList>
            <person name="Chen C.-Y."/>
            <person name="Wu K.-M."/>
            <person name="Chang Y.-C."/>
            <person name="Chang C.-H."/>
            <person name="Tsai H.-C."/>
            <person name="Liao T.-L."/>
            <person name="Liu Y.-M."/>
            <person name="Chen H.-J."/>
            <person name="Shen A.B.-T."/>
            <person name="Li J.-C."/>
            <person name="Su T.-L."/>
            <person name="Shao C.-P."/>
            <person name="Lee C.-T."/>
            <person name="Hor L.-I."/>
            <person name="Tsai S.-F."/>
        </authorList>
    </citation>
    <scope>NUCLEOTIDE SEQUENCE [LARGE SCALE GENOMIC DNA]</scope>
    <source>
        <strain>YJ016</strain>
    </source>
</reference>
<protein>
    <recommendedName>
        <fullName evidence="1">Elongation factor G 1</fullName>
        <shortName evidence="1">EF-G 1</shortName>
    </recommendedName>
</protein>
<name>EFG1_VIBVY</name>
<comment type="function">
    <text evidence="1">Catalyzes the GTP-dependent ribosomal translocation step during translation elongation. During this step, the ribosome changes from the pre-translocational (PRE) to the post-translocational (POST) state as the newly formed A-site-bound peptidyl-tRNA and P-site-bound deacylated tRNA move to the P and E sites, respectively. Catalyzes the coordinated movement of the two tRNA molecules, the mRNA and conformational changes in the ribosome.</text>
</comment>
<comment type="subcellular location">
    <subcellularLocation>
        <location evidence="1">Cytoplasm</location>
    </subcellularLocation>
</comment>
<comment type="similarity">
    <text evidence="1">Belongs to the TRAFAC class translation factor GTPase superfamily. Classic translation factor GTPase family. EF-G/EF-2 subfamily.</text>
</comment>
<sequence length="699" mass="77413">MARKTPIERYRNIGICAHVDAGKTTTTERILFYTGLSHKIGEVHDGAATMDWMEQEQERGITITSAATTTFWRGMEAQFQDHRVNIIDTPGHVDFTIEVERSLRVLDGAVVVFCGSSGVEPQSETVWRQADKYHVPRMVFVNKMDRAGADFLRVVDQIKNRLGANPVPIQLNVGAEEDFKGVIDLIKMKMINWNEADQGMTFTYEEIPADMIELAEEWRNNLVEAAAEASEELMDKYLEEGELTEAEIKQALRARTLNNEIVLATCGSAFKNKGVQAVLDAVIEYLPSPIDVPAIKGIDENDNEVERHADDNEPFSALAFKIATDPFVGTLTFIRVYSGVVNTGDAVYNSVKQKKERFGRIVQMHANKREEIKEVRAGDIAAAIGLKDVTTGDTLCNSDHKVILERMEFPEPVIQIAVEPRSKADQEKMGIALGKLAAEDPSFRVETDAETGQTLISGMGELHLDIIVDRMKREFSVDCNVGKPQVAYRETIRGKSEVEGKFVRQSGGRGQYGHVWIKLEPSEPGAGFVFVDEVVGGVIPKEYISSVAKGIEEQMNSGVLAGYPVLDIKATLFDGSYHDVDSSEMAFKIAGSMAFKKGALEAQPVILEPMMKVEVTTPEDWMGDVVGDLNRRRGIIEGMDEGVAGLKIIRAQVPLSEMFGYATDLRSATQGRASYSMEFFEYAEVPKNIAEAIVAERGY</sequence>